<proteinExistence type="inferred from homology"/>
<sequence length="92" mass="10373">MLEIEIVYGLPDRQVLKTMQLAEGTTVRTAALQSGLDGIFENLNLHSAPLGIFGKAVKDDTPLRDGDRIEVYRPLLIDPKEARRKRVQNQEE</sequence>
<accession>B4RK79</accession>
<protein>
    <recommendedName>
        <fullName evidence="1">Protein RnfH</fullName>
    </recommendedName>
</protein>
<dbReference type="EMBL" id="CP001050">
    <property type="protein sequence ID" value="ACF29230.1"/>
    <property type="molecule type" value="Genomic_DNA"/>
</dbReference>
<dbReference type="RefSeq" id="WP_003687804.1">
    <property type="nucleotide sequence ID" value="NC_011035.1"/>
</dbReference>
<dbReference type="SMR" id="B4RK79"/>
<dbReference type="KEGG" id="ngk:NGK_0539"/>
<dbReference type="HOGENOM" id="CLU_150721_1_0_4"/>
<dbReference type="Proteomes" id="UP000002564">
    <property type="component" value="Chromosome"/>
</dbReference>
<dbReference type="Gene3D" id="3.10.20.280">
    <property type="entry name" value="RnfH-like"/>
    <property type="match status" value="1"/>
</dbReference>
<dbReference type="HAMAP" id="MF_00460">
    <property type="entry name" value="UPF0125_RnfH"/>
    <property type="match status" value="1"/>
</dbReference>
<dbReference type="InterPro" id="IPR016155">
    <property type="entry name" value="Mopterin_synth/thiamin_S_b"/>
</dbReference>
<dbReference type="InterPro" id="IPR005346">
    <property type="entry name" value="RnfH"/>
</dbReference>
<dbReference type="InterPro" id="IPR037021">
    <property type="entry name" value="RnfH_sf"/>
</dbReference>
<dbReference type="NCBIfam" id="NF002490">
    <property type="entry name" value="PRK01777.1"/>
    <property type="match status" value="1"/>
</dbReference>
<dbReference type="PANTHER" id="PTHR37483">
    <property type="entry name" value="UPF0125 PROTEIN RATB"/>
    <property type="match status" value="1"/>
</dbReference>
<dbReference type="PANTHER" id="PTHR37483:SF1">
    <property type="entry name" value="UPF0125 PROTEIN RATB"/>
    <property type="match status" value="1"/>
</dbReference>
<dbReference type="Pfam" id="PF03658">
    <property type="entry name" value="Ub-RnfH"/>
    <property type="match status" value="1"/>
</dbReference>
<dbReference type="SUPFAM" id="SSF54285">
    <property type="entry name" value="MoaD/ThiS"/>
    <property type="match status" value="1"/>
</dbReference>
<organism>
    <name type="scientific">Neisseria gonorrhoeae (strain NCCP11945)</name>
    <dbReference type="NCBI Taxonomy" id="521006"/>
    <lineage>
        <taxon>Bacteria</taxon>
        <taxon>Pseudomonadati</taxon>
        <taxon>Pseudomonadota</taxon>
        <taxon>Betaproteobacteria</taxon>
        <taxon>Neisseriales</taxon>
        <taxon>Neisseriaceae</taxon>
        <taxon>Neisseria</taxon>
    </lineage>
</organism>
<gene>
    <name evidence="1" type="primary">rnfH</name>
    <name type="ordered locus">NGK_0539</name>
</gene>
<evidence type="ECO:0000255" key="1">
    <source>
        <dbReference type="HAMAP-Rule" id="MF_00460"/>
    </source>
</evidence>
<feature type="chain" id="PRO_1000200187" description="Protein RnfH">
    <location>
        <begin position="1"/>
        <end position="92"/>
    </location>
</feature>
<name>RNFH_NEIG2</name>
<comment type="similarity">
    <text evidence="1">Belongs to the UPF0125 (RnfH) family.</text>
</comment>
<reference key="1">
    <citation type="journal article" date="2008" name="J. Bacteriol.">
        <title>Complete genome sequence of Neisseria gonorrhoeae NCCP11945.</title>
        <authorList>
            <person name="Chung G.T."/>
            <person name="Yoo J.S."/>
            <person name="Oh H.B."/>
            <person name="Lee Y.S."/>
            <person name="Cha S.H."/>
            <person name="Kim S.J."/>
            <person name="Yoo C.K."/>
        </authorList>
    </citation>
    <scope>NUCLEOTIDE SEQUENCE [LARGE SCALE GENOMIC DNA]</scope>
    <source>
        <strain>NCCP11945</strain>
    </source>
</reference>